<reference key="1">
    <citation type="journal article" date="2006" name="PLoS Genet.">
        <title>Genome sequence of Rickettsia bellii illuminates the role of amoebae in gene exchanges between intracellular pathogens.</title>
        <authorList>
            <person name="Ogata H."/>
            <person name="La Scola B."/>
            <person name="Audic S."/>
            <person name="Renesto P."/>
            <person name="Blanc G."/>
            <person name="Robert C."/>
            <person name="Fournier P.-E."/>
            <person name="Claverie J.-M."/>
            <person name="Raoult D."/>
        </authorList>
    </citation>
    <scope>NUCLEOTIDE SEQUENCE [LARGE SCALE GENOMIC DNA]</scope>
    <source>
        <strain>RML369-C</strain>
    </source>
</reference>
<feature type="chain" id="PRO_0000251362" description="Large ribosomal subunit protein uL18">
    <location>
        <begin position="1"/>
        <end position="118"/>
    </location>
</feature>
<dbReference type="EMBL" id="CP000087">
    <property type="protein sequence ID" value="ABE05127.1"/>
    <property type="molecule type" value="Genomic_DNA"/>
</dbReference>
<dbReference type="RefSeq" id="WP_011477705.1">
    <property type="nucleotide sequence ID" value="NC_007940.1"/>
</dbReference>
<dbReference type="SMR" id="Q1RHN7"/>
<dbReference type="KEGG" id="rbe:RBE_1046"/>
<dbReference type="eggNOG" id="COG0256">
    <property type="taxonomic scope" value="Bacteria"/>
</dbReference>
<dbReference type="HOGENOM" id="CLU_098841_0_1_5"/>
<dbReference type="OrthoDB" id="9810939at2"/>
<dbReference type="Proteomes" id="UP000001951">
    <property type="component" value="Chromosome"/>
</dbReference>
<dbReference type="GO" id="GO:0022625">
    <property type="term" value="C:cytosolic large ribosomal subunit"/>
    <property type="evidence" value="ECO:0007669"/>
    <property type="project" value="TreeGrafter"/>
</dbReference>
<dbReference type="GO" id="GO:0008097">
    <property type="term" value="F:5S rRNA binding"/>
    <property type="evidence" value="ECO:0007669"/>
    <property type="project" value="TreeGrafter"/>
</dbReference>
<dbReference type="GO" id="GO:0003735">
    <property type="term" value="F:structural constituent of ribosome"/>
    <property type="evidence" value="ECO:0007669"/>
    <property type="project" value="InterPro"/>
</dbReference>
<dbReference type="GO" id="GO:0006412">
    <property type="term" value="P:translation"/>
    <property type="evidence" value="ECO:0007669"/>
    <property type="project" value="UniProtKB-UniRule"/>
</dbReference>
<dbReference type="CDD" id="cd00432">
    <property type="entry name" value="Ribosomal_L18_L5e"/>
    <property type="match status" value="1"/>
</dbReference>
<dbReference type="FunFam" id="3.30.420.100:FF:000001">
    <property type="entry name" value="50S ribosomal protein L18"/>
    <property type="match status" value="1"/>
</dbReference>
<dbReference type="Gene3D" id="3.30.420.100">
    <property type="match status" value="1"/>
</dbReference>
<dbReference type="HAMAP" id="MF_01337_B">
    <property type="entry name" value="Ribosomal_uL18_B"/>
    <property type="match status" value="1"/>
</dbReference>
<dbReference type="InterPro" id="IPR004389">
    <property type="entry name" value="Ribosomal_uL18_bac-type"/>
</dbReference>
<dbReference type="InterPro" id="IPR005484">
    <property type="entry name" value="Ribosomal_uL18_bac/euk"/>
</dbReference>
<dbReference type="NCBIfam" id="TIGR00060">
    <property type="entry name" value="L18_bact"/>
    <property type="match status" value="1"/>
</dbReference>
<dbReference type="PANTHER" id="PTHR12899">
    <property type="entry name" value="39S RIBOSOMAL PROTEIN L18, MITOCHONDRIAL"/>
    <property type="match status" value="1"/>
</dbReference>
<dbReference type="PANTHER" id="PTHR12899:SF3">
    <property type="entry name" value="LARGE RIBOSOMAL SUBUNIT PROTEIN UL18M"/>
    <property type="match status" value="1"/>
</dbReference>
<dbReference type="Pfam" id="PF00861">
    <property type="entry name" value="Ribosomal_L18p"/>
    <property type="match status" value="1"/>
</dbReference>
<dbReference type="SUPFAM" id="SSF53137">
    <property type="entry name" value="Translational machinery components"/>
    <property type="match status" value="1"/>
</dbReference>
<comment type="function">
    <text evidence="1">This is one of the proteins that bind and probably mediate the attachment of the 5S RNA into the large ribosomal subunit, where it forms part of the central protuberance.</text>
</comment>
<comment type="subunit">
    <text evidence="1">Part of the 50S ribosomal subunit; part of the 5S rRNA/L5/L18/L25 subcomplex. Contacts the 5S and 23S rRNAs.</text>
</comment>
<comment type="similarity">
    <text evidence="1">Belongs to the universal ribosomal protein uL18 family.</text>
</comment>
<organism>
    <name type="scientific">Rickettsia bellii (strain RML369-C)</name>
    <dbReference type="NCBI Taxonomy" id="336407"/>
    <lineage>
        <taxon>Bacteria</taxon>
        <taxon>Pseudomonadati</taxon>
        <taxon>Pseudomonadota</taxon>
        <taxon>Alphaproteobacteria</taxon>
        <taxon>Rickettsiales</taxon>
        <taxon>Rickettsiaceae</taxon>
        <taxon>Rickettsieae</taxon>
        <taxon>Rickettsia</taxon>
        <taxon>belli group</taxon>
    </lineage>
</organism>
<proteinExistence type="inferred from homology"/>
<name>RL18_RICBR</name>
<accession>Q1RHN7</accession>
<sequence length="118" mass="13331">MRSAKLKFEKRRSRIRHKIAKTANRARLSIFKSGRHIYAQIIDDTKSVTIASASTLDEKIKKLKKSHCNVENATKIGELIAEKAVSCGVEEVVFDRSGYKYHGVVKALADAARKKIRF</sequence>
<protein>
    <recommendedName>
        <fullName evidence="1">Large ribosomal subunit protein uL18</fullName>
    </recommendedName>
    <alternativeName>
        <fullName evidence="2">50S ribosomal protein L18</fullName>
    </alternativeName>
</protein>
<keyword id="KW-0687">Ribonucleoprotein</keyword>
<keyword id="KW-0689">Ribosomal protein</keyword>
<keyword id="KW-0694">RNA-binding</keyword>
<keyword id="KW-0699">rRNA-binding</keyword>
<evidence type="ECO:0000255" key="1">
    <source>
        <dbReference type="HAMAP-Rule" id="MF_01337"/>
    </source>
</evidence>
<evidence type="ECO:0000305" key="2"/>
<gene>
    <name evidence="1" type="primary">rplR</name>
    <name type="ordered locus">RBE_1046</name>
</gene>